<accession>P33413</accession>
<accession>D3DKP5</accession>
<evidence type="ECO:0000255" key="1"/>
<evidence type="ECO:0000256" key="2">
    <source>
        <dbReference type="SAM" id="MobiDB-lite"/>
    </source>
</evidence>
<evidence type="ECO:0000305" key="3"/>
<comment type="function">
    <text>Required for active transport of urea.</text>
</comment>
<comment type="subunit">
    <text>May polymerize.</text>
</comment>
<comment type="subcellular location">
    <subcellularLocation>
        <location>Membrane</location>
        <topology>Multi-pass membrane protein</topology>
    </subcellularLocation>
</comment>
<comment type="induction">
    <text>By allophanate or its non-metabolized analog oxalurate. Sensitive to nitrogen catabolite repression.</text>
</comment>
<comment type="similarity">
    <text evidence="3">Belongs to the sodium:solute symporter (SSF) (TC 2.A.21) family.</text>
</comment>
<reference key="1">
    <citation type="journal article" date="1993" name="J. Bacteriol.">
        <title>Regulation of the urea active transporter gene (DUR3) in Saccharomyces cerevisiae.</title>
        <authorList>
            <person name="Elberry H.M."/>
            <person name="Majumdar M.L."/>
            <person name="Cunningham T.S."/>
            <person name="Sumrada R.A."/>
            <person name="Cooper T.G."/>
        </authorList>
    </citation>
    <scope>NUCLEOTIDE SEQUENCE [GENOMIC DNA]</scope>
    <source>
        <strain>TCY1</strain>
    </source>
</reference>
<reference key="2">
    <citation type="journal article" date="1994" name="Science">
        <title>Complete nucleotide sequence of Saccharomyces cerevisiae chromosome VIII.</title>
        <authorList>
            <person name="Johnston M."/>
            <person name="Andrews S."/>
            <person name="Brinkman R."/>
            <person name="Cooper J."/>
            <person name="Ding H."/>
            <person name="Dover J."/>
            <person name="Du Z."/>
            <person name="Favello A."/>
            <person name="Fulton L."/>
            <person name="Gattung S."/>
            <person name="Geisel C."/>
            <person name="Kirsten J."/>
            <person name="Kucaba T."/>
            <person name="Hillier L.W."/>
            <person name="Jier M."/>
            <person name="Johnston L."/>
            <person name="Langston Y."/>
            <person name="Latreille P."/>
            <person name="Louis E.J."/>
            <person name="Macri C."/>
            <person name="Mardis E."/>
            <person name="Menezes S."/>
            <person name="Mouser L."/>
            <person name="Nhan M."/>
            <person name="Rifkin L."/>
            <person name="Riles L."/>
            <person name="St Peter H."/>
            <person name="Trevaskis E."/>
            <person name="Vaughan K."/>
            <person name="Vignati D."/>
            <person name="Wilcox L."/>
            <person name="Wohldman P."/>
            <person name="Waterston R."/>
            <person name="Wilson R."/>
            <person name="Vaudin M."/>
        </authorList>
    </citation>
    <scope>NUCLEOTIDE SEQUENCE [LARGE SCALE GENOMIC DNA]</scope>
    <source>
        <strain>ATCC 204508 / S288c</strain>
    </source>
</reference>
<reference key="3">
    <citation type="journal article" date="2014" name="G3 (Bethesda)">
        <title>The reference genome sequence of Saccharomyces cerevisiae: Then and now.</title>
        <authorList>
            <person name="Engel S.R."/>
            <person name="Dietrich F.S."/>
            <person name="Fisk D.G."/>
            <person name="Binkley G."/>
            <person name="Balakrishnan R."/>
            <person name="Costanzo M.C."/>
            <person name="Dwight S.S."/>
            <person name="Hitz B.C."/>
            <person name="Karra K."/>
            <person name="Nash R.S."/>
            <person name="Weng S."/>
            <person name="Wong E.D."/>
            <person name="Lloyd P."/>
            <person name="Skrzypek M.S."/>
            <person name="Miyasato S.R."/>
            <person name="Simison M."/>
            <person name="Cherry J.M."/>
        </authorList>
    </citation>
    <scope>GENOME REANNOTATION</scope>
    <source>
        <strain>ATCC 204508 / S288c</strain>
    </source>
</reference>
<reference key="4">
    <citation type="journal article" date="2007" name="Genome Res.">
        <title>Approaching a complete repository of sequence-verified protein-encoding clones for Saccharomyces cerevisiae.</title>
        <authorList>
            <person name="Hu Y."/>
            <person name="Rolfs A."/>
            <person name="Bhullar B."/>
            <person name="Murthy T.V.S."/>
            <person name="Zhu C."/>
            <person name="Berger M.F."/>
            <person name="Camargo A.A."/>
            <person name="Kelley F."/>
            <person name="McCarron S."/>
            <person name="Jepson D."/>
            <person name="Richardson A."/>
            <person name="Raphael J."/>
            <person name="Moreira D."/>
            <person name="Taycher E."/>
            <person name="Zuo D."/>
            <person name="Mohr S."/>
            <person name="Kane M.F."/>
            <person name="Williamson J."/>
            <person name="Simpson A.J.G."/>
            <person name="Bulyk M.L."/>
            <person name="Harlow E."/>
            <person name="Marsischky G."/>
            <person name="Kolodner R.D."/>
            <person name="LaBaer J."/>
        </authorList>
    </citation>
    <scope>NUCLEOTIDE SEQUENCE [GENOMIC DNA]</scope>
    <source>
        <strain>ATCC 204508 / S288c</strain>
    </source>
</reference>
<reference key="5">
    <citation type="journal article" date="2006" name="Proc. Natl. Acad. Sci. U.S.A.">
        <title>A global topology map of the Saccharomyces cerevisiae membrane proteome.</title>
        <authorList>
            <person name="Kim H."/>
            <person name="Melen K."/>
            <person name="Oesterberg M."/>
            <person name="von Heijne G."/>
        </authorList>
    </citation>
    <scope>TOPOLOGY [LARGE SCALE ANALYSIS]</scope>
    <source>
        <strain>ATCC 208353 / W303-1A</strain>
    </source>
</reference>
<proteinExistence type="evidence at protein level"/>
<dbReference type="EMBL" id="L19875">
    <property type="protein sequence ID" value="AAA34582.1"/>
    <property type="molecule type" value="Genomic_DNA"/>
</dbReference>
<dbReference type="EMBL" id="U11582">
    <property type="protein sequence ID" value="AAB65069.1"/>
    <property type="molecule type" value="Genomic_DNA"/>
</dbReference>
<dbReference type="EMBL" id="AY693170">
    <property type="protein sequence ID" value="AAT93189.1"/>
    <property type="molecule type" value="Genomic_DNA"/>
</dbReference>
<dbReference type="EMBL" id="BK006934">
    <property type="protein sequence ID" value="DAA06669.1"/>
    <property type="molecule type" value="Genomic_DNA"/>
</dbReference>
<dbReference type="PIR" id="S46830">
    <property type="entry name" value="S46830"/>
</dbReference>
<dbReference type="RefSeq" id="NP_011847.1">
    <property type="nucleotide sequence ID" value="NM_001179096.1"/>
</dbReference>
<dbReference type="SMR" id="P33413"/>
<dbReference type="BioGRID" id="36407">
    <property type="interactions" value="47"/>
</dbReference>
<dbReference type="FunCoup" id="P33413">
    <property type="interactions" value="1031"/>
</dbReference>
<dbReference type="IntAct" id="P33413">
    <property type="interactions" value="17"/>
</dbReference>
<dbReference type="MINT" id="P33413"/>
<dbReference type="STRING" id="4932.YHL016C"/>
<dbReference type="TCDB" id="2.A.21.6.1">
    <property type="family name" value="the solute:sodium symporter (sss) family"/>
</dbReference>
<dbReference type="iPTMnet" id="P33413"/>
<dbReference type="PaxDb" id="4932-YHL016C"/>
<dbReference type="PeptideAtlas" id="P33413"/>
<dbReference type="EnsemblFungi" id="YHL016C_mRNA">
    <property type="protein sequence ID" value="YHL016C"/>
    <property type="gene ID" value="YHL016C"/>
</dbReference>
<dbReference type="GeneID" id="856370"/>
<dbReference type="KEGG" id="sce:YHL016C"/>
<dbReference type="AGR" id="SGD:S000001008"/>
<dbReference type="SGD" id="S000001008">
    <property type="gene designation" value="DUR3"/>
</dbReference>
<dbReference type="VEuPathDB" id="FungiDB:YHL016C"/>
<dbReference type="eggNOG" id="KOG2348">
    <property type="taxonomic scope" value="Eukaryota"/>
</dbReference>
<dbReference type="HOGENOM" id="CLU_010778_2_1_1"/>
<dbReference type="InParanoid" id="P33413"/>
<dbReference type="OMA" id="LGANWLT"/>
<dbReference type="OrthoDB" id="6132759at2759"/>
<dbReference type="BioCyc" id="YEAST:G3O-31036-MONOMER"/>
<dbReference type="BioGRID-ORCS" id="856370">
    <property type="hits" value="0 hits in 10 CRISPR screens"/>
</dbReference>
<dbReference type="PRO" id="PR:P33413"/>
<dbReference type="Proteomes" id="UP000002311">
    <property type="component" value="Chromosome VIII"/>
</dbReference>
<dbReference type="RNAct" id="P33413">
    <property type="molecule type" value="protein"/>
</dbReference>
<dbReference type="GO" id="GO:0071944">
    <property type="term" value="C:cell periphery"/>
    <property type="evidence" value="ECO:0007005"/>
    <property type="project" value="SGD"/>
</dbReference>
<dbReference type="GO" id="GO:0005783">
    <property type="term" value="C:endoplasmic reticulum"/>
    <property type="evidence" value="ECO:0007005"/>
    <property type="project" value="SGD"/>
</dbReference>
<dbReference type="GO" id="GO:0005886">
    <property type="term" value="C:plasma membrane"/>
    <property type="evidence" value="ECO:0000314"/>
    <property type="project" value="SGD"/>
</dbReference>
<dbReference type="GO" id="GO:0015489">
    <property type="term" value="F:putrescine transmembrane transporter activity"/>
    <property type="evidence" value="ECO:0000314"/>
    <property type="project" value="SGD"/>
</dbReference>
<dbReference type="GO" id="GO:0015606">
    <property type="term" value="F:spermidine transmembrane transporter activity"/>
    <property type="evidence" value="ECO:0000314"/>
    <property type="project" value="SGD"/>
</dbReference>
<dbReference type="GO" id="GO:0015204">
    <property type="term" value="F:urea transmembrane transporter activity"/>
    <property type="evidence" value="ECO:0000315"/>
    <property type="project" value="SGD"/>
</dbReference>
<dbReference type="GO" id="GO:0015847">
    <property type="term" value="P:putrescine transport"/>
    <property type="evidence" value="ECO:0000314"/>
    <property type="project" value="SGD"/>
</dbReference>
<dbReference type="GO" id="GO:0015848">
    <property type="term" value="P:spermidine transport"/>
    <property type="evidence" value="ECO:0000314"/>
    <property type="project" value="SGD"/>
</dbReference>
<dbReference type="GO" id="GO:0015840">
    <property type="term" value="P:urea transport"/>
    <property type="evidence" value="ECO:0000315"/>
    <property type="project" value="SGD"/>
</dbReference>
<dbReference type="CDD" id="cd11476">
    <property type="entry name" value="SLC5sbd_DUR3"/>
    <property type="match status" value="1"/>
</dbReference>
<dbReference type="FunFam" id="1.20.1730.10:FF:000006">
    <property type="entry name" value="Urea active transporter"/>
    <property type="match status" value="1"/>
</dbReference>
<dbReference type="Gene3D" id="1.20.1730.10">
    <property type="entry name" value="Sodium/glucose cotransporter"/>
    <property type="match status" value="1"/>
</dbReference>
<dbReference type="InterPro" id="IPR031155">
    <property type="entry name" value="DUR"/>
</dbReference>
<dbReference type="InterPro" id="IPR038377">
    <property type="entry name" value="Na/Glc_symporter_sf"/>
</dbReference>
<dbReference type="InterPro" id="IPR001734">
    <property type="entry name" value="Na/solute_symporter"/>
</dbReference>
<dbReference type="NCBIfam" id="TIGR00813">
    <property type="entry name" value="sss"/>
    <property type="match status" value="1"/>
</dbReference>
<dbReference type="PANTHER" id="PTHR46154">
    <property type="match status" value="1"/>
</dbReference>
<dbReference type="PANTHER" id="PTHR46154:SF4">
    <property type="entry name" value="UREA ACTIVE TRANSPORTER"/>
    <property type="match status" value="1"/>
</dbReference>
<dbReference type="Pfam" id="PF00474">
    <property type="entry name" value="SSF"/>
    <property type="match status" value="1"/>
</dbReference>
<dbReference type="PROSITE" id="PS50283">
    <property type="entry name" value="NA_SOLUT_SYMP_3"/>
    <property type="match status" value="1"/>
</dbReference>
<name>DUR3_YEAST</name>
<organism>
    <name type="scientific">Saccharomyces cerevisiae (strain ATCC 204508 / S288c)</name>
    <name type="common">Baker's yeast</name>
    <dbReference type="NCBI Taxonomy" id="559292"/>
    <lineage>
        <taxon>Eukaryota</taxon>
        <taxon>Fungi</taxon>
        <taxon>Dikarya</taxon>
        <taxon>Ascomycota</taxon>
        <taxon>Saccharomycotina</taxon>
        <taxon>Saccharomycetes</taxon>
        <taxon>Saccharomycetales</taxon>
        <taxon>Saccharomycetaceae</taxon>
        <taxon>Saccharomyces</taxon>
    </lineage>
</organism>
<protein>
    <recommendedName>
        <fullName>Urea active transporter</fullName>
    </recommendedName>
</protein>
<sequence>MGEFKPPLPQGAGYAIVLGLGAVFAGMMVLTTYLLKRYQKEIITAEEFTTAGRSVKTGLVAAAVVSSWIWCSTLLTSSTKEYADGIFGGYAYAAGACFQIIAFAILAIKTKQMAPNAHTYLELVRTRYGKIGHGCYLFYAIATNILVTSMLLTSGSAVFSDLTGMNTIASCFLLPVGVVVYTLFGGIKATFLTDYMHTCVIIIIVLVFAFKVYATSDVLGSPGKVYDLVREAAKRHPVDGNYQGEYMTMTSKSAGILLIINLIGNFGTVFLDNGYWNKAISASPAASLKAYAIGGLAWFAVPSLISLTMGLACLAVETSPNFPTYPDPLTSFQANSGLVLPAAAIAIMGKGGAVASLLMIFMAVTSAMSAELIAVSSVFTYDIYREYIDPRASGKKLIYTSHVACIFFGLAMSGFSVGLYYGGISMGYIYEMMGIIISSAVLPVVLTLCSKDMNLVAAVVSPILGTGLAIMSWLVCTKSLYKELTVDTTFMDYPMLTGNLVALLSPAIFIPILTYVFKPQNFDWEKMKDITRVDETAELVQADPDIQLYDAEANDKEQEEETNSLVSDSEKNDVRVNNEKLIEPNLGVVISNAIFQEDDTQLQNELDEEQRELARGLKIAYFLCVFFALAFLVVWPMPMYGSKYIFSKKFFTGWVVVMIIWLFFSAFAVCIYPLWEGRHGIYTTLRGLYWDLSGQTYKLREWQNSNPQDLHVVTSQISARAHRQSSHFGQVDEII</sequence>
<gene>
    <name type="primary">DUR3</name>
    <name type="ordered locus">YHL016C</name>
</gene>
<feature type="chain" id="PRO_0000105397" description="Urea active transporter">
    <location>
        <begin position="1"/>
        <end position="735"/>
    </location>
</feature>
<feature type="topological domain" description="Cytoplasmic" evidence="1">
    <location>
        <begin position="1"/>
        <end position="14"/>
    </location>
</feature>
<feature type="transmembrane region" description="Helical" evidence="1">
    <location>
        <begin position="15"/>
        <end position="35"/>
    </location>
</feature>
<feature type="topological domain" description="Extracellular" evidence="1">
    <location>
        <begin position="36"/>
        <end position="85"/>
    </location>
</feature>
<feature type="transmembrane region" description="Helical" evidence="1">
    <location>
        <begin position="86"/>
        <end position="106"/>
    </location>
</feature>
<feature type="topological domain" description="Cytoplasmic" evidence="1">
    <location>
        <begin position="107"/>
        <end position="130"/>
    </location>
</feature>
<feature type="transmembrane region" description="Helical" evidence="1">
    <location>
        <begin position="131"/>
        <end position="151"/>
    </location>
</feature>
<feature type="topological domain" description="Extracellular" evidence="1">
    <location>
        <begin position="152"/>
        <end position="166"/>
    </location>
</feature>
<feature type="transmembrane region" description="Helical" evidence="1">
    <location>
        <begin position="167"/>
        <end position="187"/>
    </location>
</feature>
<feature type="topological domain" description="Cytoplasmic" evidence="1">
    <location>
        <begin position="188"/>
        <end position="189"/>
    </location>
</feature>
<feature type="transmembrane region" description="Helical" evidence="1">
    <location>
        <begin position="190"/>
        <end position="210"/>
    </location>
</feature>
<feature type="topological domain" description="Extracellular" evidence="1">
    <location>
        <begin position="211"/>
        <end position="253"/>
    </location>
</feature>
<feature type="transmembrane region" description="Helical" evidence="1">
    <location>
        <begin position="254"/>
        <end position="274"/>
    </location>
</feature>
<feature type="topological domain" description="Cytoplasmic" evidence="1">
    <location>
        <begin position="275"/>
        <end position="295"/>
    </location>
</feature>
<feature type="transmembrane region" description="Helical" evidence="1">
    <location>
        <begin position="296"/>
        <end position="316"/>
    </location>
</feature>
<feature type="topological domain" description="Extracellular" evidence="1">
    <location>
        <begin position="317"/>
        <end position="343"/>
    </location>
</feature>
<feature type="transmembrane region" description="Helical" evidence="1">
    <location>
        <begin position="344"/>
        <end position="364"/>
    </location>
</feature>
<feature type="topological domain" description="Cytoplasmic" evidence="1">
    <location>
        <begin position="365"/>
        <end position="403"/>
    </location>
</feature>
<feature type="transmembrane region" description="Helical" evidence="1">
    <location>
        <begin position="404"/>
        <end position="424"/>
    </location>
</feature>
<feature type="topological domain" description="Extracellular" evidence="1">
    <location>
        <position position="425"/>
    </location>
</feature>
<feature type="transmembrane region" description="Helical" evidence="1">
    <location>
        <begin position="426"/>
        <end position="446"/>
    </location>
</feature>
<feature type="topological domain" description="Cytoplasmic" evidence="1">
    <location>
        <begin position="447"/>
        <end position="454"/>
    </location>
</feature>
<feature type="transmembrane region" description="Helical" evidence="1">
    <location>
        <begin position="455"/>
        <end position="475"/>
    </location>
</feature>
<feature type="topological domain" description="Extracellular" evidence="1">
    <location>
        <begin position="476"/>
        <end position="496"/>
    </location>
</feature>
<feature type="transmembrane region" description="Helical" evidence="1">
    <location>
        <begin position="497"/>
        <end position="517"/>
    </location>
</feature>
<feature type="topological domain" description="Cytoplasmic" evidence="1">
    <location>
        <begin position="518"/>
        <end position="618"/>
    </location>
</feature>
<feature type="transmembrane region" description="Helical" evidence="1">
    <location>
        <begin position="619"/>
        <end position="639"/>
    </location>
</feature>
<feature type="topological domain" description="Extracellular" evidence="1">
    <location>
        <begin position="640"/>
        <end position="650"/>
    </location>
</feature>
<feature type="transmembrane region" description="Helical" evidence="1">
    <location>
        <begin position="651"/>
        <end position="671"/>
    </location>
</feature>
<feature type="topological domain" description="Cytoplasmic" evidence="1">
    <location>
        <begin position="672"/>
        <end position="735"/>
    </location>
</feature>
<feature type="region of interest" description="Disordered" evidence="2">
    <location>
        <begin position="553"/>
        <end position="572"/>
    </location>
</feature>
<feature type="sequence conflict" description="In Ref. 1; AAA34582." evidence="3" ref="1">
    <original>GLVAAA</original>
    <variation>RLSGCS</variation>
    <location>
        <begin position="58"/>
        <end position="63"/>
    </location>
</feature>
<keyword id="KW-0472">Membrane</keyword>
<keyword id="KW-1185">Reference proteome</keyword>
<keyword id="KW-0812">Transmembrane</keyword>
<keyword id="KW-1133">Transmembrane helix</keyword>
<keyword id="KW-0813">Transport</keyword>